<sequence>MSAPAGRLQPQRFAALPNPVTAENKFWRSFKVPVVAKEYSAITSIHFSAESPYDFAVTSGARVQIYGASSRSVKKTIARFKDTAYSGNIRKDGKLLLAGDATGLVQIFDLSTRSILRALDAHQFPVHVTQFCPYANTTFLSGSDDKTVKVWDLSTGAVQYDLSGHEDYVRTASWMSATRLVSGGYDGTIRLWDTRIADPEVMSFSHGEAIDVVLPMQSGSTVISAGGPSIKVWDLVAGRQTPTKKLSNHQKSITCLAMNSENTRLLSGGLDGHVKIYNISDWKVVHGMKYSGPILSMGLSPDSCNLVVGMSNGTLSQRTRRITKQTSSKTPFLGGVGSAFGVVGKKKQIYKGENDEFYVEEARRKRLRPFDKALKSFCYSDALDMVLENGSPVLIITMLIELLHVGGLRIALSNRDDLSLTPLINFLRKYIRDPRFSETLCIVTSTILDIYGAALGGSVMVENAISKLREKVEQEVAVTQRANELVGMLQMLSA</sequence>
<accession>O94365</accession>
<organism>
    <name type="scientific">Schizosaccharomyces pombe (strain 972 / ATCC 24843)</name>
    <name type="common">Fission yeast</name>
    <dbReference type="NCBI Taxonomy" id="284812"/>
    <lineage>
        <taxon>Eukaryota</taxon>
        <taxon>Fungi</taxon>
        <taxon>Dikarya</taxon>
        <taxon>Ascomycota</taxon>
        <taxon>Taphrinomycotina</taxon>
        <taxon>Schizosaccharomycetes</taxon>
        <taxon>Schizosaccharomycetales</taxon>
        <taxon>Schizosaccharomycetaceae</taxon>
        <taxon>Schizosaccharomyces</taxon>
    </lineage>
</organism>
<keyword id="KW-0539">Nucleus</keyword>
<keyword id="KW-1185">Reference proteome</keyword>
<keyword id="KW-0677">Repeat</keyword>
<keyword id="KW-0687">Ribonucleoprotein</keyword>
<keyword id="KW-0690">Ribosome biogenesis</keyword>
<keyword id="KW-0698">rRNA processing</keyword>
<keyword id="KW-0804">Transcription</keyword>
<keyword id="KW-0853">WD repeat</keyword>
<name>UTP15_SCHPO</name>
<proteinExistence type="inferred from homology"/>
<comment type="function">
    <text evidence="1">Involved in nucleolar processing of pre-18S ribosomal RNA. Required for optimal pre-ribosomal RNA transcription by RNA polymerase I together with a subset of U3 proteins required for transcription (t-UTPs) (By similarity).</text>
</comment>
<comment type="subunit">
    <text evidence="2">Component of the ribosomal small subunit (SSU) processome.</text>
</comment>
<comment type="subcellular location">
    <subcellularLocation>
        <location evidence="4">Nucleus</location>
        <location evidence="4">Nucleolus</location>
    </subcellularLocation>
</comment>
<gene>
    <name type="primary">utp15</name>
    <name type="ORF">SPBC428.19c</name>
</gene>
<feature type="chain" id="PRO_0000307922" description="U3 small nucleolar RNA-associated protein 15">
    <location>
        <begin position="1"/>
        <end position="494"/>
    </location>
</feature>
<feature type="repeat" description="WD 1" evidence="3">
    <location>
        <begin position="37"/>
        <end position="76"/>
    </location>
</feature>
<feature type="repeat" description="WD 2" evidence="3">
    <location>
        <begin position="79"/>
        <end position="118"/>
    </location>
</feature>
<feature type="repeat" description="WD 3" evidence="3">
    <location>
        <begin position="121"/>
        <end position="161"/>
    </location>
</feature>
<feature type="repeat" description="WD 4" evidence="3">
    <location>
        <begin position="164"/>
        <end position="202"/>
    </location>
</feature>
<feature type="repeat" description="WD 5" evidence="3">
    <location>
        <begin position="205"/>
        <end position="243"/>
    </location>
</feature>
<feature type="repeat" description="WD 6" evidence="3">
    <location>
        <begin position="248"/>
        <end position="287"/>
    </location>
</feature>
<feature type="repeat" description="WD 7" evidence="3">
    <location>
        <begin position="289"/>
        <end position="328"/>
    </location>
</feature>
<reference evidence="6" key="1">
    <citation type="journal article" date="2002" name="Nature">
        <title>The genome sequence of Schizosaccharomyces pombe.</title>
        <authorList>
            <person name="Wood V."/>
            <person name="Gwilliam R."/>
            <person name="Rajandream M.A."/>
            <person name="Lyne M.H."/>
            <person name="Lyne R."/>
            <person name="Stewart A."/>
            <person name="Sgouros J.G."/>
            <person name="Peat N."/>
            <person name="Hayles J."/>
            <person name="Baker S.G."/>
            <person name="Basham D."/>
            <person name="Bowman S."/>
            <person name="Brooks K."/>
            <person name="Brown D."/>
            <person name="Brown S."/>
            <person name="Chillingworth T."/>
            <person name="Churcher C.M."/>
            <person name="Collins M."/>
            <person name="Connor R."/>
            <person name="Cronin A."/>
            <person name="Davis P."/>
            <person name="Feltwell T."/>
            <person name="Fraser A."/>
            <person name="Gentles S."/>
            <person name="Goble A."/>
            <person name="Hamlin N."/>
            <person name="Harris D.E."/>
            <person name="Hidalgo J."/>
            <person name="Hodgson G."/>
            <person name="Holroyd S."/>
            <person name="Hornsby T."/>
            <person name="Howarth S."/>
            <person name="Huckle E.J."/>
            <person name="Hunt S."/>
            <person name="Jagels K."/>
            <person name="James K.D."/>
            <person name="Jones L."/>
            <person name="Jones M."/>
            <person name="Leather S."/>
            <person name="McDonald S."/>
            <person name="McLean J."/>
            <person name="Mooney P."/>
            <person name="Moule S."/>
            <person name="Mungall K.L."/>
            <person name="Murphy L.D."/>
            <person name="Niblett D."/>
            <person name="Odell C."/>
            <person name="Oliver K."/>
            <person name="O'Neil S."/>
            <person name="Pearson D."/>
            <person name="Quail M.A."/>
            <person name="Rabbinowitsch E."/>
            <person name="Rutherford K.M."/>
            <person name="Rutter S."/>
            <person name="Saunders D."/>
            <person name="Seeger K."/>
            <person name="Sharp S."/>
            <person name="Skelton J."/>
            <person name="Simmonds M.N."/>
            <person name="Squares R."/>
            <person name="Squares S."/>
            <person name="Stevens K."/>
            <person name="Taylor K."/>
            <person name="Taylor R.G."/>
            <person name="Tivey A."/>
            <person name="Walsh S.V."/>
            <person name="Warren T."/>
            <person name="Whitehead S."/>
            <person name="Woodward J.R."/>
            <person name="Volckaert G."/>
            <person name="Aert R."/>
            <person name="Robben J."/>
            <person name="Grymonprez B."/>
            <person name="Weltjens I."/>
            <person name="Vanstreels E."/>
            <person name="Rieger M."/>
            <person name="Schaefer M."/>
            <person name="Mueller-Auer S."/>
            <person name="Gabel C."/>
            <person name="Fuchs M."/>
            <person name="Duesterhoeft A."/>
            <person name="Fritzc C."/>
            <person name="Holzer E."/>
            <person name="Moestl D."/>
            <person name="Hilbert H."/>
            <person name="Borzym K."/>
            <person name="Langer I."/>
            <person name="Beck A."/>
            <person name="Lehrach H."/>
            <person name="Reinhardt R."/>
            <person name="Pohl T.M."/>
            <person name="Eger P."/>
            <person name="Zimmermann W."/>
            <person name="Wedler H."/>
            <person name="Wambutt R."/>
            <person name="Purnelle B."/>
            <person name="Goffeau A."/>
            <person name="Cadieu E."/>
            <person name="Dreano S."/>
            <person name="Gloux S."/>
            <person name="Lelaure V."/>
            <person name="Mottier S."/>
            <person name="Galibert F."/>
            <person name="Aves S.J."/>
            <person name="Xiang Z."/>
            <person name="Hunt C."/>
            <person name="Moore K."/>
            <person name="Hurst S.M."/>
            <person name="Lucas M."/>
            <person name="Rochet M."/>
            <person name="Gaillardin C."/>
            <person name="Tallada V.A."/>
            <person name="Garzon A."/>
            <person name="Thode G."/>
            <person name="Daga R.R."/>
            <person name="Cruzado L."/>
            <person name="Jimenez J."/>
            <person name="Sanchez M."/>
            <person name="del Rey F."/>
            <person name="Benito J."/>
            <person name="Dominguez A."/>
            <person name="Revuelta J.L."/>
            <person name="Moreno S."/>
            <person name="Armstrong J."/>
            <person name="Forsburg S.L."/>
            <person name="Cerutti L."/>
            <person name="Lowe T."/>
            <person name="McCombie W.R."/>
            <person name="Paulsen I."/>
            <person name="Potashkin J."/>
            <person name="Shpakovski G.V."/>
            <person name="Ussery D."/>
            <person name="Barrell B.G."/>
            <person name="Nurse P."/>
        </authorList>
    </citation>
    <scope>NUCLEOTIDE SEQUENCE [LARGE SCALE GENOMIC DNA]</scope>
    <source>
        <strain>972 / ATCC 24843</strain>
    </source>
</reference>
<reference evidence="5" key="2">
    <citation type="journal article" date="2006" name="Nat. Biotechnol.">
        <title>ORFeome cloning and global analysis of protein localization in the fission yeast Schizosaccharomyces pombe.</title>
        <authorList>
            <person name="Matsuyama A."/>
            <person name="Arai R."/>
            <person name="Yashiroda Y."/>
            <person name="Shirai A."/>
            <person name="Kamata A."/>
            <person name="Sekido S."/>
            <person name="Kobayashi Y."/>
            <person name="Hashimoto A."/>
            <person name="Hamamoto M."/>
            <person name="Hiraoka Y."/>
            <person name="Horinouchi S."/>
            <person name="Yoshida M."/>
        </authorList>
    </citation>
    <scope>SUBCELLULAR LOCATION [LARGE SCALE ANALYSIS]</scope>
</reference>
<evidence type="ECO:0000250" key="1"/>
<evidence type="ECO:0000250" key="2">
    <source>
        <dbReference type="UniProtKB" id="Q04305"/>
    </source>
</evidence>
<evidence type="ECO:0000255" key="3"/>
<evidence type="ECO:0000269" key="4">
    <source>
    </source>
</evidence>
<evidence type="ECO:0000305" key="5"/>
<evidence type="ECO:0000312" key="6">
    <source>
        <dbReference type="EMBL" id="CAA22294.1"/>
    </source>
</evidence>
<dbReference type="EMBL" id="CU329671">
    <property type="protein sequence ID" value="CAA22294.1"/>
    <property type="molecule type" value="Genomic_DNA"/>
</dbReference>
<dbReference type="PIR" id="T40471">
    <property type="entry name" value="T40471"/>
</dbReference>
<dbReference type="RefSeq" id="NP_595197.1">
    <property type="nucleotide sequence ID" value="NM_001021104.2"/>
</dbReference>
<dbReference type="SMR" id="O94365"/>
<dbReference type="BioGRID" id="277375">
    <property type="interactions" value="4"/>
</dbReference>
<dbReference type="FunCoup" id="O94365">
    <property type="interactions" value="775"/>
</dbReference>
<dbReference type="STRING" id="284812.O94365"/>
<dbReference type="iPTMnet" id="O94365"/>
<dbReference type="PaxDb" id="4896-SPBC428.19c.1"/>
<dbReference type="EnsemblFungi" id="SPBC428.19c.1">
    <property type="protein sequence ID" value="SPBC428.19c.1:pep"/>
    <property type="gene ID" value="SPBC428.19c"/>
</dbReference>
<dbReference type="GeneID" id="2540858"/>
<dbReference type="KEGG" id="spo:2540858"/>
<dbReference type="PomBase" id="SPBC428.19c">
    <property type="gene designation" value="utp15"/>
</dbReference>
<dbReference type="VEuPathDB" id="FungiDB:SPBC428.19c"/>
<dbReference type="eggNOG" id="KOG0310">
    <property type="taxonomic scope" value="Eukaryota"/>
</dbReference>
<dbReference type="HOGENOM" id="CLU_021102_4_0_1"/>
<dbReference type="InParanoid" id="O94365"/>
<dbReference type="OMA" id="ATYQVVH"/>
<dbReference type="PhylomeDB" id="O94365"/>
<dbReference type="Reactome" id="R-SPO-6791226">
    <property type="pathway name" value="Major pathway of rRNA processing in the nucleolus and cytosol"/>
</dbReference>
<dbReference type="PRO" id="PR:O94365"/>
<dbReference type="Proteomes" id="UP000002485">
    <property type="component" value="Chromosome II"/>
</dbReference>
<dbReference type="GO" id="GO:0005829">
    <property type="term" value="C:cytosol"/>
    <property type="evidence" value="ECO:0007005"/>
    <property type="project" value="PomBase"/>
</dbReference>
<dbReference type="GO" id="GO:0072686">
    <property type="term" value="C:mitotic spindle"/>
    <property type="evidence" value="ECO:0007005"/>
    <property type="project" value="PomBase"/>
</dbReference>
<dbReference type="GO" id="GO:0005730">
    <property type="term" value="C:nucleolus"/>
    <property type="evidence" value="ECO:0007005"/>
    <property type="project" value="PomBase"/>
</dbReference>
<dbReference type="GO" id="GO:0032040">
    <property type="term" value="C:small-subunit processome"/>
    <property type="evidence" value="ECO:0000266"/>
    <property type="project" value="PomBase"/>
</dbReference>
<dbReference type="GO" id="GO:0034455">
    <property type="term" value="C:t-UTP complex"/>
    <property type="evidence" value="ECO:0000266"/>
    <property type="project" value="PomBase"/>
</dbReference>
<dbReference type="GO" id="GO:0030515">
    <property type="term" value="F:snoRNA binding"/>
    <property type="evidence" value="ECO:0000266"/>
    <property type="project" value="PomBase"/>
</dbReference>
<dbReference type="GO" id="GO:0030490">
    <property type="term" value="P:maturation of SSU-rRNA"/>
    <property type="evidence" value="ECO:0000266"/>
    <property type="project" value="PomBase"/>
</dbReference>
<dbReference type="GO" id="GO:0045943">
    <property type="term" value="P:positive regulation of transcription by RNA polymerase I"/>
    <property type="evidence" value="ECO:0000318"/>
    <property type="project" value="GO_Central"/>
</dbReference>
<dbReference type="GO" id="GO:0006364">
    <property type="term" value="P:rRNA processing"/>
    <property type="evidence" value="ECO:0000318"/>
    <property type="project" value="GO_Central"/>
</dbReference>
<dbReference type="CDD" id="cd00200">
    <property type="entry name" value="WD40"/>
    <property type="match status" value="1"/>
</dbReference>
<dbReference type="FunFam" id="2.130.10.10:FF:001192">
    <property type="entry name" value="Protein SLOW WALKER 1"/>
    <property type="match status" value="1"/>
</dbReference>
<dbReference type="Gene3D" id="2.130.10.10">
    <property type="entry name" value="YVTN repeat-like/Quinoprotein amine dehydrogenase"/>
    <property type="match status" value="2"/>
</dbReference>
<dbReference type="InterPro" id="IPR020472">
    <property type="entry name" value="G-protein_beta_WD-40_rep"/>
</dbReference>
<dbReference type="InterPro" id="IPR018983">
    <property type="entry name" value="U3_snoRNA-assocProt_15_C"/>
</dbReference>
<dbReference type="InterPro" id="IPR015943">
    <property type="entry name" value="WD40/YVTN_repeat-like_dom_sf"/>
</dbReference>
<dbReference type="InterPro" id="IPR019775">
    <property type="entry name" value="WD40_repeat_CS"/>
</dbReference>
<dbReference type="InterPro" id="IPR036322">
    <property type="entry name" value="WD40_repeat_dom_sf"/>
</dbReference>
<dbReference type="InterPro" id="IPR001680">
    <property type="entry name" value="WD40_rpt"/>
</dbReference>
<dbReference type="PANTHER" id="PTHR19924:SF26">
    <property type="entry name" value="U3 SMALL NUCLEOLAR RNA-ASSOCIATED PROTEIN 15 HOMOLOG"/>
    <property type="match status" value="1"/>
</dbReference>
<dbReference type="PANTHER" id="PTHR19924">
    <property type="entry name" value="UTP15 U3 SMALL NUCLEOLAR RNA-ASSOCIATED PROTEIN 15 FAMILY MEMBER"/>
    <property type="match status" value="1"/>
</dbReference>
<dbReference type="Pfam" id="PF09384">
    <property type="entry name" value="UTP15_C"/>
    <property type="match status" value="1"/>
</dbReference>
<dbReference type="Pfam" id="PF00400">
    <property type="entry name" value="WD40"/>
    <property type="match status" value="3"/>
</dbReference>
<dbReference type="PRINTS" id="PR00320">
    <property type="entry name" value="GPROTEINBRPT"/>
</dbReference>
<dbReference type="SMART" id="SM00320">
    <property type="entry name" value="WD40"/>
    <property type="match status" value="6"/>
</dbReference>
<dbReference type="SUPFAM" id="SSF50978">
    <property type="entry name" value="WD40 repeat-like"/>
    <property type="match status" value="1"/>
</dbReference>
<dbReference type="PROSITE" id="PS00678">
    <property type="entry name" value="WD_REPEATS_1"/>
    <property type="match status" value="1"/>
</dbReference>
<dbReference type="PROSITE" id="PS50082">
    <property type="entry name" value="WD_REPEATS_2"/>
    <property type="match status" value="3"/>
</dbReference>
<dbReference type="PROSITE" id="PS50294">
    <property type="entry name" value="WD_REPEATS_REGION"/>
    <property type="match status" value="1"/>
</dbReference>
<protein>
    <recommendedName>
        <fullName>U3 small nucleolar RNA-associated protein 15</fullName>
        <shortName>U3 snoRNA-associated protein 15</shortName>
    </recommendedName>
    <alternativeName>
        <fullName>U3 protein 15 required for transcription</fullName>
    </alternativeName>
</protein>